<comment type="function">
    <text>Plays an important role in the regulation of embryonic development, cell proliferation and cell differentiation. Required for normal branching morphogenesis. May play a role in wound healing.</text>
</comment>
<comment type="subunit">
    <text evidence="1">Interacts with FGFR1 and FGFR2. Interacts with FGFBP1 (By similarity).</text>
</comment>
<comment type="subcellular location">
    <subcellularLocation>
        <location evidence="4">Secreted</location>
    </subcellularLocation>
</comment>
<comment type="tissue specificity">
    <text>Preferentially expressed in the lung in adults.</text>
</comment>
<comment type="similarity">
    <text evidence="4">Belongs to the heparin-binding growth factors family.</text>
</comment>
<proteinExistence type="evidence at transcript level"/>
<accession>P70492</accession>
<feature type="signal peptide" evidence="2">
    <location>
        <begin position="1"/>
        <end position="36"/>
    </location>
</feature>
<feature type="chain" id="PRO_0000008983" description="Fibroblast growth factor 10">
    <location>
        <begin position="37"/>
        <end position="215"/>
    </location>
</feature>
<feature type="region of interest" description="Disordered" evidence="3">
    <location>
        <begin position="49"/>
        <end position="73"/>
    </location>
</feature>
<feature type="compositionally biased region" description="Low complexity" evidence="3">
    <location>
        <begin position="51"/>
        <end position="69"/>
    </location>
</feature>
<feature type="glycosylation site" description="N-linked (GlcNAc...) asparagine" evidence="2">
    <location>
        <position position="50"/>
    </location>
</feature>
<feature type="glycosylation site" description="N-linked (GlcNAc...) asparagine" evidence="2">
    <location>
        <position position="203"/>
    </location>
</feature>
<keyword id="KW-0325">Glycoprotein</keyword>
<keyword id="KW-0339">Growth factor</keyword>
<keyword id="KW-1185">Reference proteome</keyword>
<keyword id="KW-0964">Secreted</keyword>
<keyword id="KW-0732">Signal</keyword>
<evidence type="ECO:0000250" key="1"/>
<evidence type="ECO:0000255" key="2"/>
<evidence type="ECO:0000256" key="3">
    <source>
        <dbReference type="SAM" id="MobiDB-lite"/>
    </source>
</evidence>
<evidence type="ECO:0000305" key="4"/>
<protein>
    <recommendedName>
        <fullName>Fibroblast growth factor 10</fullName>
        <shortName>FGF-10</shortName>
    </recommendedName>
</protein>
<dbReference type="EMBL" id="D79215">
    <property type="protein sequence ID" value="BAA11468.1"/>
    <property type="molecule type" value="mRNA"/>
</dbReference>
<dbReference type="RefSeq" id="NP_037083.1">
    <property type="nucleotide sequence ID" value="NM_012951.2"/>
</dbReference>
<dbReference type="SMR" id="P70492"/>
<dbReference type="FunCoup" id="P70492">
    <property type="interactions" value="566"/>
</dbReference>
<dbReference type="STRING" id="10116.ENSRNOP00000016485"/>
<dbReference type="GlyCosmos" id="P70492">
    <property type="glycosylation" value="2 sites, No reported glycans"/>
</dbReference>
<dbReference type="GlyGen" id="P70492">
    <property type="glycosylation" value="2 sites"/>
</dbReference>
<dbReference type="PhosphoSitePlus" id="P70492"/>
<dbReference type="PaxDb" id="10116-ENSRNOP00000016485"/>
<dbReference type="Ensembl" id="ENSRNOT00000016485.4">
    <property type="protein sequence ID" value="ENSRNOP00000016485.1"/>
    <property type="gene ID" value="ENSRNOG00000012278.6"/>
</dbReference>
<dbReference type="GeneID" id="25443"/>
<dbReference type="KEGG" id="rno:25443"/>
<dbReference type="AGR" id="RGD:2606"/>
<dbReference type="CTD" id="2255"/>
<dbReference type="RGD" id="2606">
    <property type="gene designation" value="Fgf10"/>
</dbReference>
<dbReference type="eggNOG" id="KOG3885">
    <property type="taxonomic scope" value="Eukaryota"/>
</dbReference>
<dbReference type="GeneTree" id="ENSGT00940000158907"/>
<dbReference type="HOGENOM" id="CLU_081609_3_1_1"/>
<dbReference type="InParanoid" id="P70492"/>
<dbReference type="OMA" id="EFNTDCK"/>
<dbReference type="OrthoDB" id="5987799at2759"/>
<dbReference type="PhylomeDB" id="P70492"/>
<dbReference type="TreeFam" id="TF317805"/>
<dbReference type="Reactome" id="R-RNO-109704">
    <property type="pathway name" value="PI3K Cascade"/>
</dbReference>
<dbReference type="Reactome" id="R-RNO-1257604">
    <property type="pathway name" value="PIP3 activates AKT signaling"/>
</dbReference>
<dbReference type="Reactome" id="R-RNO-190370">
    <property type="pathway name" value="FGFR1b ligand binding and activation"/>
</dbReference>
<dbReference type="Reactome" id="R-RNO-190377">
    <property type="pathway name" value="FGFR2b ligand binding and activation"/>
</dbReference>
<dbReference type="Reactome" id="R-RNO-5654219">
    <property type="pathway name" value="Phospholipase C-mediated cascade: FGFR1"/>
</dbReference>
<dbReference type="Reactome" id="R-RNO-5654221">
    <property type="pathway name" value="Phospholipase C-mediated cascade, FGFR2"/>
</dbReference>
<dbReference type="Reactome" id="R-RNO-5654687">
    <property type="pathway name" value="Downstream signaling of activated FGFR1"/>
</dbReference>
<dbReference type="Reactome" id="R-RNO-5654688">
    <property type="pathway name" value="SHC-mediated cascade:FGFR1"/>
</dbReference>
<dbReference type="Reactome" id="R-RNO-5654689">
    <property type="pathway name" value="PI-3K cascade:FGFR1"/>
</dbReference>
<dbReference type="Reactome" id="R-RNO-5654693">
    <property type="pathway name" value="FRS-mediated FGFR1 signaling"/>
</dbReference>
<dbReference type="Reactome" id="R-RNO-5654695">
    <property type="pathway name" value="PI-3K cascade:FGFR2"/>
</dbReference>
<dbReference type="Reactome" id="R-RNO-5654699">
    <property type="pathway name" value="SHC-mediated cascade:FGFR2"/>
</dbReference>
<dbReference type="Reactome" id="R-RNO-5654700">
    <property type="pathway name" value="FRS-mediated FGFR2 signaling"/>
</dbReference>
<dbReference type="Reactome" id="R-RNO-5654726">
    <property type="pathway name" value="Negative regulation of FGFR1 signaling"/>
</dbReference>
<dbReference type="Reactome" id="R-RNO-5654727">
    <property type="pathway name" value="Negative regulation of FGFR2 signaling"/>
</dbReference>
<dbReference type="Reactome" id="R-RNO-5658623">
    <property type="pathway name" value="FGFRL1 modulation of FGFR1 signaling"/>
</dbReference>
<dbReference type="Reactome" id="R-RNO-5673001">
    <property type="pathway name" value="RAF/MAP kinase cascade"/>
</dbReference>
<dbReference type="Reactome" id="R-RNO-6811558">
    <property type="pathway name" value="PI5P, PP2A and IER3 Regulate PI3K/AKT Signaling"/>
</dbReference>
<dbReference type="PRO" id="PR:P70492"/>
<dbReference type="Proteomes" id="UP000002494">
    <property type="component" value="Chromosome 2"/>
</dbReference>
<dbReference type="Bgee" id="ENSRNOG00000012278">
    <property type="expression patterns" value="Expressed in pancreas and 14 other cell types or tissues"/>
</dbReference>
<dbReference type="GO" id="GO:0009986">
    <property type="term" value="C:cell surface"/>
    <property type="evidence" value="ECO:0000266"/>
    <property type="project" value="RGD"/>
</dbReference>
<dbReference type="GO" id="GO:0005737">
    <property type="term" value="C:cytoplasm"/>
    <property type="evidence" value="ECO:0000318"/>
    <property type="project" value="GO_Central"/>
</dbReference>
<dbReference type="GO" id="GO:0005615">
    <property type="term" value="C:extracellular space"/>
    <property type="evidence" value="ECO:0000266"/>
    <property type="project" value="RGD"/>
</dbReference>
<dbReference type="GO" id="GO:0005634">
    <property type="term" value="C:nucleus"/>
    <property type="evidence" value="ECO:0000250"/>
    <property type="project" value="UniProtKB"/>
</dbReference>
<dbReference type="GO" id="GO:0005886">
    <property type="term" value="C:plasma membrane"/>
    <property type="evidence" value="ECO:0000266"/>
    <property type="project" value="RGD"/>
</dbReference>
<dbReference type="GO" id="GO:0042056">
    <property type="term" value="F:chemoattractant activity"/>
    <property type="evidence" value="ECO:0000266"/>
    <property type="project" value="RGD"/>
</dbReference>
<dbReference type="GO" id="GO:0005104">
    <property type="term" value="F:fibroblast growth factor receptor binding"/>
    <property type="evidence" value="ECO:0000250"/>
    <property type="project" value="UniProtKB"/>
</dbReference>
<dbReference type="GO" id="GO:0008083">
    <property type="term" value="F:growth factor activity"/>
    <property type="evidence" value="ECO:0000266"/>
    <property type="project" value="RGD"/>
</dbReference>
<dbReference type="GO" id="GO:0008201">
    <property type="term" value="F:heparin binding"/>
    <property type="evidence" value="ECO:0000250"/>
    <property type="project" value="UniProtKB"/>
</dbReference>
<dbReference type="GO" id="GO:0005111">
    <property type="term" value="F:type 2 fibroblast growth factor receptor binding"/>
    <property type="evidence" value="ECO:0000266"/>
    <property type="project" value="RGD"/>
</dbReference>
<dbReference type="GO" id="GO:0030036">
    <property type="term" value="P:actin cytoskeleton organization"/>
    <property type="evidence" value="ECO:0000266"/>
    <property type="project" value="RGD"/>
</dbReference>
<dbReference type="GO" id="GO:0001525">
    <property type="term" value="P:angiogenesis"/>
    <property type="evidence" value="ECO:0000270"/>
    <property type="project" value="RGD"/>
</dbReference>
<dbReference type="GO" id="GO:0048645">
    <property type="term" value="P:animal organ formation"/>
    <property type="evidence" value="ECO:0000266"/>
    <property type="project" value="RGD"/>
</dbReference>
<dbReference type="GO" id="GO:0009887">
    <property type="term" value="P:animal organ morphogenesis"/>
    <property type="evidence" value="ECO:0000266"/>
    <property type="project" value="RGD"/>
</dbReference>
<dbReference type="GO" id="GO:0048514">
    <property type="term" value="P:blood vessel morphogenesis"/>
    <property type="evidence" value="ECO:0000266"/>
    <property type="project" value="RGD"/>
</dbReference>
<dbReference type="GO" id="GO:0001974">
    <property type="term" value="P:blood vessel remodeling"/>
    <property type="evidence" value="ECO:0000266"/>
    <property type="project" value="RGD"/>
</dbReference>
<dbReference type="GO" id="GO:0060667">
    <property type="term" value="P:branch elongation involved in salivary gland morphogenesis"/>
    <property type="evidence" value="ECO:0000266"/>
    <property type="project" value="RGD"/>
</dbReference>
<dbReference type="GO" id="GO:0060445">
    <property type="term" value="P:branching involved in salivary gland morphogenesis"/>
    <property type="evidence" value="ECO:0000266"/>
    <property type="project" value="RGD"/>
</dbReference>
<dbReference type="GO" id="GO:0048754">
    <property type="term" value="P:branching morphogenesis of an epithelial tube"/>
    <property type="evidence" value="ECO:0000266"/>
    <property type="project" value="RGD"/>
</dbReference>
<dbReference type="GO" id="GO:0060436">
    <property type="term" value="P:bronchiole morphogenesis"/>
    <property type="evidence" value="ECO:0000266"/>
    <property type="project" value="RGD"/>
</dbReference>
<dbReference type="GO" id="GO:0060449">
    <property type="term" value="P:bud elongation involved in lung branching"/>
    <property type="evidence" value="ECO:0000266"/>
    <property type="project" value="RGD"/>
</dbReference>
<dbReference type="GO" id="GO:0060447">
    <property type="term" value="P:bud outgrowth involved in lung branching"/>
    <property type="evidence" value="ECO:0000266"/>
    <property type="project" value="RGD"/>
</dbReference>
<dbReference type="GO" id="GO:0030154">
    <property type="term" value="P:cell differentiation"/>
    <property type="evidence" value="ECO:0000270"/>
    <property type="project" value="RGD"/>
</dbReference>
<dbReference type="GO" id="GO:0008283">
    <property type="term" value="P:cell population proliferation"/>
    <property type="evidence" value="ECO:0000266"/>
    <property type="project" value="RGD"/>
</dbReference>
<dbReference type="GO" id="GO:0007267">
    <property type="term" value="P:cell-cell signaling"/>
    <property type="evidence" value="ECO:0000266"/>
    <property type="project" value="RGD"/>
</dbReference>
<dbReference type="GO" id="GO:0006935">
    <property type="term" value="P:chemotaxis"/>
    <property type="evidence" value="ECO:0000266"/>
    <property type="project" value="RGD"/>
</dbReference>
<dbReference type="GO" id="GO:0007368">
    <property type="term" value="P:determination of left/right symmetry"/>
    <property type="evidence" value="ECO:0000266"/>
    <property type="project" value="RGD"/>
</dbReference>
<dbReference type="GO" id="GO:0048565">
    <property type="term" value="P:digestive tract development"/>
    <property type="evidence" value="ECO:0000266"/>
    <property type="project" value="RGD"/>
</dbReference>
<dbReference type="GO" id="GO:0031076">
    <property type="term" value="P:embryonic camera-type eye development"/>
    <property type="evidence" value="ECO:0000266"/>
    <property type="project" value="RGD"/>
</dbReference>
<dbReference type="GO" id="GO:0048566">
    <property type="term" value="P:embryonic digestive tract development"/>
    <property type="evidence" value="ECO:0000266"/>
    <property type="project" value="RGD"/>
</dbReference>
<dbReference type="GO" id="GO:0048557">
    <property type="term" value="P:embryonic digestive tract morphogenesis"/>
    <property type="evidence" value="ECO:0000266"/>
    <property type="project" value="RGD"/>
</dbReference>
<dbReference type="GO" id="GO:0030538">
    <property type="term" value="P:embryonic genitalia morphogenesis"/>
    <property type="evidence" value="ECO:0000266"/>
    <property type="project" value="RGD"/>
</dbReference>
<dbReference type="GO" id="GO:0009880">
    <property type="term" value="P:embryonic pattern specification"/>
    <property type="evidence" value="ECO:0000266"/>
    <property type="project" value="RGD"/>
</dbReference>
<dbReference type="GO" id="GO:0001935">
    <property type="term" value="P:endothelial cell proliferation"/>
    <property type="evidence" value="ECO:0000266"/>
    <property type="project" value="RGD"/>
</dbReference>
<dbReference type="GO" id="GO:0008544">
    <property type="term" value="P:epidermis development"/>
    <property type="evidence" value="ECO:0000266"/>
    <property type="project" value="RGD"/>
</dbReference>
<dbReference type="GO" id="GO:0048730">
    <property type="term" value="P:epidermis morphogenesis"/>
    <property type="evidence" value="ECO:0000266"/>
    <property type="project" value="RGD"/>
</dbReference>
<dbReference type="GO" id="GO:0030855">
    <property type="term" value="P:epithelial cell differentiation"/>
    <property type="evidence" value="ECO:0000266"/>
    <property type="project" value="RGD"/>
</dbReference>
<dbReference type="GO" id="GO:0050673">
    <property type="term" value="P:epithelial cell proliferation"/>
    <property type="evidence" value="ECO:0000266"/>
    <property type="project" value="RGD"/>
</dbReference>
<dbReference type="GO" id="GO:0060664">
    <property type="term" value="P:epithelial cell proliferation involved in salivary gland morphogenesis"/>
    <property type="evidence" value="ECO:0000266"/>
    <property type="project" value="RGD"/>
</dbReference>
<dbReference type="GO" id="GO:0060441">
    <property type="term" value="P:epithelial tube branching involved in lung morphogenesis"/>
    <property type="evidence" value="ECO:0000266"/>
    <property type="project" value="RGD"/>
</dbReference>
<dbReference type="GO" id="GO:0070371">
    <property type="term" value="P:ERK1 and ERK2 cascade"/>
    <property type="evidence" value="ECO:0000266"/>
    <property type="project" value="RGD"/>
</dbReference>
<dbReference type="GO" id="GO:0000132">
    <property type="term" value="P:establishment of mitotic spindle orientation"/>
    <property type="evidence" value="ECO:0000266"/>
    <property type="project" value="RGD"/>
</dbReference>
<dbReference type="GO" id="GO:0097192">
    <property type="term" value="P:extrinsic apoptotic signaling pathway in absence of ligand"/>
    <property type="evidence" value="ECO:0000266"/>
    <property type="project" value="RGD"/>
</dbReference>
<dbReference type="GO" id="GO:0048807">
    <property type="term" value="P:female genitalia morphogenesis"/>
    <property type="evidence" value="ECO:0000266"/>
    <property type="project" value="RGD"/>
</dbReference>
<dbReference type="GO" id="GO:1902178">
    <property type="term" value="P:fibroblast growth factor receptor apoptotic signaling pathway"/>
    <property type="evidence" value="ECO:0000266"/>
    <property type="project" value="RGD"/>
</dbReference>
<dbReference type="GO" id="GO:0008543">
    <property type="term" value="P:fibroblast growth factor receptor signaling pathway"/>
    <property type="evidence" value="ECO:0000266"/>
    <property type="project" value="RGD"/>
</dbReference>
<dbReference type="GO" id="GO:0060595">
    <property type="term" value="P:fibroblast growth factor receptor signaling pathway involved in mammary gland specification"/>
    <property type="evidence" value="ECO:0000266"/>
    <property type="project" value="RGD"/>
</dbReference>
<dbReference type="GO" id="GO:0048144">
    <property type="term" value="P:fibroblast proliferation"/>
    <property type="evidence" value="ECO:0000266"/>
    <property type="project" value="RGD"/>
</dbReference>
<dbReference type="GO" id="GO:0031069">
    <property type="term" value="P:hair follicle morphogenesis"/>
    <property type="evidence" value="ECO:0000266"/>
    <property type="project" value="RGD"/>
</dbReference>
<dbReference type="GO" id="GO:0070384">
    <property type="term" value="P:Harderian gland development"/>
    <property type="evidence" value="ECO:0000266"/>
    <property type="project" value="RGD"/>
</dbReference>
<dbReference type="GO" id="GO:0050930">
    <property type="term" value="P:induction of positive chemotaxis"/>
    <property type="evidence" value="ECO:0000266"/>
    <property type="project" value="RGD"/>
</dbReference>
<dbReference type="GO" id="GO:0042472">
    <property type="term" value="P:inner ear morphogenesis"/>
    <property type="evidence" value="ECO:0000266"/>
    <property type="project" value="RGD"/>
</dbReference>
<dbReference type="GO" id="GO:0043616">
    <property type="term" value="P:keratinocyte proliferation"/>
    <property type="evidence" value="ECO:0000266"/>
    <property type="project" value="RGD"/>
</dbReference>
<dbReference type="GO" id="GO:0032808">
    <property type="term" value="P:lacrimal gland development"/>
    <property type="evidence" value="ECO:0000266"/>
    <property type="project" value="RGD"/>
</dbReference>
<dbReference type="GO" id="GO:0060174">
    <property type="term" value="P:limb bud formation"/>
    <property type="evidence" value="ECO:0000266"/>
    <property type="project" value="RGD"/>
</dbReference>
<dbReference type="GO" id="GO:0060173">
    <property type="term" value="P:limb development"/>
    <property type="evidence" value="ECO:0000266"/>
    <property type="project" value="RGD"/>
</dbReference>
<dbReference type="GO" id="GO:0035108">
    <property type="term" value="P:limb morphogenesis"/>
    <property type="evidence" value="ECO:0000266"/>
    <property type="project" value="RGD"/>
</dbReference>
<dbReference type="GO" id="GO:0048286">
    <property type="term" value="P:lung alveolus development"/>
    <property type="evidence" value="ECO:0000266"/>
    <property type="project" value="RGD"/>
</dbReference>
<dbReference type="GO" id="GO:0030324">
    <property type="term" value="P:lung development"/>
    <property type="evidence" value="ECO:0000266"/>
    <property type="project" value="RGD"/>
</dbReference>
<dbReference type="GO" id="GO:0060428">
    <property type="term" value="P:lung epithelium development"/>
    <property type="evidence" value="ECO:0000266"/>
    <property type="project" value="RGD"/>
</dbReference>
<dbReference type="GO" id="GO:0060425">
    <property type="term" value="P:lung morphogenesis"/>
    <property type="evidence" value="ECO:0000266"/>
    <property type="project" value="RGD"/>
</dbReference>
<dbReference type="GO" id="GO:0061115">
    <property type="term" value="P:lung proximal/distal axis specification"/>
    <property type="evidence" value="ECO:0000266"/>
    <property type="project" value="RGD"/>
</dbReference>
<dbReference type="GO" id="GO:0060430">
    <property type="term" value="P:lung saccule development"/>
    <property type="evidence" value="ECO:0000266"/>
    <property type="project" value="RGD"/>
</dbReference>
<dbReference type="GO" id="GO:0048808">
    <property type="term" value="P:male genitalia morphogenesis"/>
    <property type="evidence" value="ECO:0000266"/>
    <property type="project" value="RGD"/>
</dbReference>
<dbReference type="GO" id="GO:0060615">
    <property type="term" value="P:mammary gland bud formation"/>
    <property type="evidence" value="ECO:0000266"/>
    <property type="project" value="RGD"/>
</dbReference>
<dbReference type="GO" id="GO:0060594">
    <property type="term" value="P:mammary gland specification"/>
    <property type="evidence" value="ECO:0000266"/>
    <property type="project" value="RGD"/>
</dbReference>
<dbReference type="GO" id="GO:0060915">
    <property type="term" value="P:mesenchymal cell differentiation involved in lung development"/>
    <property type="evidence" value="ECO:0000266"/>
    <property type="project" value="RGD"/>
</dbReference>
<dbReference type="GO" id="GO:0060496">
    <property type="term" value="P:mesenchymal-epithelial cell signaling involved in lung development"/>
    <property type="evidence" value="ECO:0000266"/>
    <property type="project" value="RGD"/>
</dbReference>
<dbReference type="GO" id="GO:0001823">
    <property type="term" value="P:mesonephros development"/>
    <property type="evidence" value="ECO:0000266"/>
    <property type="project" value="RGD"/>
</dbReference>
<dbReference type="GO" id="GO:0001656">
    <property type="term" value="P:metanephros development"/>
    <property type="evidence" value="ECO:0000266"/>
    <property type="project" value="RGD"/>
</dbReference>
<dbReference type="GO" id="GO:0003338">
    <property type="term" value="P:metanephros morphogenesis"/>
    <property type="evidence" value="ECO:0000266"/>
    <property type="project" value="RGD"/>
</dbReference>
<dbReference type="GO" id="GO:0000278">
    <property type="term" value="P:mitotic cell cycle"/>
    <property type="evidence" value="ECO:0000266"/>
    <property type="project" value="RGD"/>
</dbReference>
<dbReference type="GO" id="GO:0042693">
    <property type="term" value="P:muscle cell fate commitment"/>
    <property type="evidence" value="ECO:0000266"/>
    <property type="project" value="RGD"/>
</dbReference>
<dbReference type="GO" id="GO:0030857">
    <property type="term" value="P:negative regulation of epithelial cell differentiation"/>
    <property type="evidence" value="ECO:0000266"/>
    <property type="project" value="RGD"/>
</dbReference>
<dbReference type="GO" id="GO:2001240">
    <property type="term" value="P:negative regulation of extrinsic apoptotic signaling pathway in absence of ligand"/>
    <property type="evidence" value="ECO:0000266"/>
    <property type="project" value="RGD"/>
</dbReference>
<dbReference type="GO" id="GO:2000647">
    <property type="term" value="P:negative regulation of stem cell proliferation"/>
    <property type="evidence" value="ECO:0000266"/>
    <property type="project" value="RGD"/>
</dbReference>
<dbReference type="GO" id="GO:0022008">
    <property type="term" value="P:neurogenesis"/>
    <property type="evidence" value="ECO:0000318"/>
    <property type="project" value="GO_Central"/>
</dbReference>
<dbReference type="GO" id="GO:0042475">
    <property type="term" value="P:odontogenesis of dentin-containing tooth"/>
    <property type="evidence" value="ECO:0000266"/>
    <property type="project" value="RGD"/>
</dbReference>
<dbReference type="GO" id="GO:0035265">
    <property type="term" value="P:organ growth"/>
    <property type="evidence" value="ECO:0000266"/>
    <property type="project" value="RGD"/>
</dbReference>
<dbReference type="GO" id="GO:0001759">
    <property type="term" value="P:organ induction"/>
    <property type="evidence" value="ECO:0000314"/>
    <property type="project" value="MGI"/>
</dbReference>
<dbReference type="GO" id="GO:0030916">
    <property type="term" value="P:otic vesicle formation"/>
    <property type="evidence" value="ECO:0000266"/>
    <property type="project" value="RGD"/>
</dbReference>
<dbReference type="GO" id="GO:0031016">
    <property type="term" value="P:pancreas development"/>
    <property type="evidence" value="ECO:0000266"/>
    <property type="project" value="RGD"/>
</dbReference>
<dbReference type="GO" id="GO:0021983">
    <property type="term" value="P:pituitary gland development"/>
    <property type="evidence" value="ECO:0000266"/>
    <property type="project" value="RGD"/>
</dbReference>
<dbReference type="GO" id="GO:0050918">
    <property type="term" value="P:positive chemotaxis"/>
    <property type="evidence" value="ECO:0000266"/>
    <property type="project" value="RGD"/>
</dbReference>
<dbReference type="GO" id="GO:0090263">
    <property type="term" value="P:positive regulation of canonical Wnt signaling pathway"/>
    <property type="evidence" value="ECO:0000266"/>
    <property type="project" value="RGD"/>
</dbReference>
<dbReference type="GO" id="GO:0008284">
    <property type="term" value="P:positive regulation of cell population proliferation"/>
    <property type="evidence" value="ECO:0000318"/>
    <property type="project" value="GO_Central"/>
</dbReference>
<dbReference type="GO" id="GO:0045739">
    <property type="term" value="P:positive regulation of DNA repair"/>
    <property type="evidence" value="ECO:0000266"/>
    <property type="project" value="RGD"/>
</dbReference>
<dbReference type="GO" id="GO:0045893">
    <property type="term" value="P:positive regulation of DNA-templated transcription"/>
    <property type="evidence" value="ECO:0000266"/>
    <property type="project" value="RGD"/>
</dbReference>
<dbReference type="GO" id="GO:0001938">
    <property type="term" value="P:positive regulation of endothelial cell proliferation"/>
    <property type="evidence" value="ECO:0000266"/>
    <property type="project" value="RGD"/>
</dbReference>
<dbReference type="GO" id="GO:0010634">
    <property type="term" value="P:positive regulation of epithelial cell migration"/>
    <property type="evidence" value="ECO:0000266"/>
    <property type="project" value="RGD"/>
</dbReference>
<dbReference type="GO" id="GO:0050679">
    <property type="term" value="P:positive regulation of epithelial cell proliferation"/>
    <property type="evidence" value="ECO:0000266"/>
    <property type="project" value="RGD"/>
</dbReference>
<dbReference type="GO" id="GO:0070374">
    <property type="term" value="P:positive regulation of ERK1 and ERK2 cascade"/>
    <property type="evidence" value="ECO:0000266"/>
    <property type="project" value="RGD"/>
</dbReference>
<dbReference type="GO" id="GO:0048146">
    <property type="term" value="P:positive regulation of fibroblast proliferation"/>
    <property type="evidence" value="ECO:0000266"/>
    <property type="project" value="RGD"/>
</dbReference>
<dbReference type="GO" id="GO:1900087">
    <property type="term" value="P:positive regulation of G1/S transition of mitotic cell cycle"/>
    <property type="evidence" value="ECO:0000266"/>
    <property type="project" value="RGD"/>
</dbReference>
<dbReference type="GO" id="GO:0071338">
    <property type="term" value="P:positive regulation of hair follicle cell proliferation"/>
    <property type="evidence" value="ECO:0000266"/>
    <property type="project" value="RGD"/>
</dbReference>
<dbReference type="GO" id="GO:0051549">
    <property type="term" value="P:positive regulation of keratinocyte migration"/>
    <property type="evidence" value="ECO:0000266"/>
    <property type="project" value="RGD"/>
</dbReference>
<dbReference type="GO" id="GO:0010838">
    <property type="term" value="P:positive regulation of keratinocyte proliferation"/>
    <property type="evidence" value="ECO:0000266"/>
    <property type="project" value="RGD"/>
</dbReference>
<dbReference type="GO" id="GO:0050671">
    <property type="term" value="P:positive regulation of lymphocyte proliferation"/>
    <property type="evidence" value="ECO:0000266"/>
    <property type="project" value="RGD"/>
</dbReference>
<dbReference type="GO" id="GO:0043410">
    <property type="term" value="P:positive regulation of MAPK cascade"/>
    <property type="evidence" value="ECO:0000266"/>
    <property type="project" value="RGD"/>
</dbReference>
<dbReference type="GO" id="GO:0045931">
    <property type="term" value="P:positive regulation of mitotic cell cycle"/>
    <property type="evidence" value="ECO:0000266"/>
    <property type="project" value="RGD"/>
</dbReference>
<dbReference type="GO" id="GO:0045747">
    <property type="term" value="P:positive regulation of Notch signaling pathway"/>
    <property type="evidence" value="ECO:0000266"/>
    <property type="project" value="RGD"/>
</dbReference>
<dbReference type="GO" id="GO:0046579">
    <property type="term" value="P:positive regulation of Ras protein signal transduction"/>
    <property type="evidence" value="ECO:0000266"/>
    <property type="project" value="RGD"/>
</dbReference>
<dbReference type="GO" id="GO:2000648">
    <property type="term" value="P:positive regulation of stem cell proliferation"/>
    <property type="evidence" value="ECO:0000266"/>
    <property type="project" value="RGD"/>
</dbReference>
<dbReference type="GO" id="GO:0045944">
    <property type="term" value="P:positive regulation of transcription by RNA polymerase II"/>
    <property type="evidence" value="ECO:0000266"/>
    <property type="project" value="RGD"/>
</dbReference>
<dbReference type="GO" id="GO:0050677">
    <property type="term" value="P:positive regulation of urothelial cell proliferation"/>
    <property type="evidence" value="ECO:0000250"/>
    <property type="project" value="UniProtKB"/>
</dbReference>
<dbReference type="GO" id="GO:0030949">
    <property type="term" value="P:positive regulation of vascular endothelial growth factor receptor signaling pathway"/>
    <property type="evidence" value="ECO:0000266"/>
    <property type="project" value="RGD"/>
</dbReference>
<dbReference type="GO" id="GO:0070352">
    <property type="term" value="P:positive regulation of white fat cell proliferation"/>
    <property type="evidence" value="ECO:0000266"/>
    <property type="project" value="RGD"/>
</dbReference>
<dbReference type="GO" id="GO:0030177">
    <property type="term" value="P:positive regulation of Wnt signaling pathway"/>
    <property type="evidence" value="ECO:0000266"/>
    <property type="project" value="RGD"/>
</dbReference>
<dbReference type="GO" id="GO:0060513">
    <property type="term" value="P:prostatic bud formation"/>
    <property type="evidence" value="ECO:0000266"/>
    <property type="project" value="RGD"/>
</dbReference>
<dbReference type="GO" id="GO:0034394">
    <property type="term" value="P:protein localization to cell surface"/>
    <property type="evidence" value="ECO:0000266"/>
    <property type="project" value="RGD"/>
</dbReference>
<dbReference type="GO" id="GO:0060019">
    <property type="term" value="P:radial glial cell differentiation"/>
    <property type="evidence" value="ECO:0000266"/>
    <property type="project" value="RGD"/>
</dbReference>
<dbReference type="GO" id="GO:0032925">
    <property type="term" value="P:regulation of activin receptor signaling pathway"/>
    <property type="evidence" value="ECO:0000266"/>
    <property type="project" value="RGD"/>
</dbReference>
<dbReference type="GO" id="GO:0060665">
    <property type="term" value="P:regulation of branching involved in salivary gland morphogenesis by mesenchymal-epithelial signaling"/>
    <property type="evidence" value="ECO:0000266"/>
    <property type="project" value="RGD"/>
</dbReference>
<dbReference type="GO" id="GO:0030334">
    <property type="term" value="P:regulation of cell migration"/>
    <property type="evidence" value="ECO:0000318"/>
    <property type="project" value="GO_Central"/>
</dbReference>
<dbReference type="GO" id="GO:0010468">
    <property type="term" value="P:regulation of gene expression"/>
    <property type="evidence" value="ECO:0000266"/>
    <property type="project" value="RGD"/>
</dbReference>
<dbReference type="GO" id="GO:0046877">
    <property type="term" value="P:regulation of saliva secretion"/>
    <property type="evidence" value="ECO:0000266"/>
    <property type="project" value="RGD"/>
</dbReference>
<dbReference type="GO" id="GO:0008589">
    <property type="term" value="P:regulation of smoothened signaling pathway"/>
    <property type="evidence" value="ECO:0000266"/>
    <property type="project" value="RGD"/>
</dbReference>
<dbReference type="GO" id="GO:0060541">
    <property type="term" value="P:respiratory system development"/>
    <property type="evidence" value="ECO:0000266"/>
    <property type="project" value="RGD"/>
</dbReference>
<dbReference type="GO" id="GO:0032355">
    <property type="term" value="P:response to estradiol"/>
    <property type="evidence" value="ECO:0000270"/>
    <property type="project" value="RGD"/>
</dbReference>
<dbReference type="GO" id="GO:0032496">
    <property type="term" value="P:response to lipopolysaccharide"/>
    <property type="evidence" value="ECO:0000270"/>
    <property type="project" value="RGD"/>
</dbReference>
<dbReference type="GO" id="GO:0007431">
    <property type="term" value="P:salivary gland development"/>
    <property type="evidence" value="ECO:0000266"/>
    <property type="project" value="RGD"/>
</dbReference>
<dbReference type="GO" id="GO:0007435">
    <property type="term" value="P:salivary gland morphogenesis"/>
    <property type="evidence" value="ECO:0000266"/>
    <property type="project" value="RGD"/>
</dbReference>
<dbReference type="GO" id="GO:0061033">
    <property type="term" value="P:secretion by lung epithelial cell involved in lung growth"/>
    <property type="evidence" value="ECO:0000266"/>
    <property type="project" value="RGD"/>
</dbReference>
<dbReference type="GO" id="GO:0060879">
    <property type="term" value="P:semicircular canal fusion"/>
    <property type="evidence" value="ECO:0000266"/>
    <property type="project" value="RGD"/>
</dbReference>
<dbReference type="GO" id="GO:0048752">
    <property type="term" value="P:semicircular canal morphogenesis"/>
    <property type="evidence" value="ECO:0000266"/>
    <property type="project" value="RGD"/>
</dbReference>
<dbReference type="GO" id="GO:0051145">
    <property type="term" value="P:smooth muscle cell differentiation"/>
    <property type="evidence" value="ECO:0000266"/>
    <property type="project" value="RGD"/>
</dbReference>
<dbReference type="GO" id="GO:0035019">
    <property type="term" value="P:somatic stem cell population maintenance"/>
    <property type="evidence" value="ECO:0000266"/>
    <property type="project" value="RGD"/>
</dbReference>
<dbReference type="GO" id="GO:0048536">
    <property type="term" value="P:spleen development"/>
    <property type="evidence" value="ECO:0000266"/>
    <property type="project" value="RGD"/>
</dbReference>
<dbReference type="GO" id="GO:0072089">
    <property type="term" value="P:stem cell proliferation"/>
    <property type="evidence" value="ECO:0000266"/>
    <property type="project" value="RGD"/>
</dbReference>
<dbReference type="GO" id="GO:0060661">
    <property type="term" value="P:submandibular salivary gland formation"/>
    <property type="evidence" value="ECO:0000266"/>
    <property type="project" value="RGD"/>
</dbReference>
<dbReference type="GO" id="GO:0070075">
    <property type="term" value="P:tear secretion"/>
    <property type="evidence" value="ECO:0000266"/>
    <property type="project" value="RGD"/>
</dbReference>
<dbReference type="GO" id="GO:0048538">
    <property type="term" value="P:thymus development"/>
    <property type="evidence" value="ECO:0000266"/>
    <property type="project" value="RGD"/>
</dbReference>
<dbReference type="GO" id="GO:0030878">
    <property type="term" value="P:thyroid gland development"/>
    <property type="evidence" value="ECO:0000266"/>
    <property type="project" value="RGD"/>
</dbReference>
<dbReference type="GO" id="GO:0042246">
    <property type="term" value="P:tissue regeneration"/>
    <property type="evidence" value="ECO:0000270"/>
    <property type="project" value="RGD"/>
</dbReference>
<dbReference type="GO" id="GO:0060510">
    <property type="term" value="P:type II pneumocyte differentiation"/>
    <property type="evidence" value="ECO:0000266"/>
    <property type="project" value="RGD"/>
</dbReference>
<dbReference type="GO" id="GO:0050674">
    <property type="term" value="P:urothelial cell proliferation"/>
    <property type="evidence" value="ECO:0000266"/>
    <property type="project" value="RGD"/>
</dbReference>
<dbReference type="GO" id="GO:0048010">
    <property type="term" value="P:vascular endothelial growth factor receptor signaling pathway"/>
    <property type="evidence" value="ECO:0000266"/>
    <property type="project" value="RGD"/>
</dbReference>
<dbReference type="GO" id="GO:0050872">
    <property type="term" value="P:white fat cell differentiation"/>
    <property type="evidence" value="ECO:0000266"/>
    <property type="project" value="RGD"/>
</dbReference>
<dbReference type="GO" id="GO:0070343">
    <property type="term" value="P:white fat cell proliferation"/>
    <property type="evidence" value="ECO:0000266"/>
    <property type="project" value="RGD"/>
</dbReference>
<dbReference type="GO" id="GO:0016055">
    <property type="term" value="P:Wnt signaling pathway"/>
    <property type="evidence" value="ECO:0000266"/>
    <property type="project" value="RGD"/>
</dbReference>
<dbReference type="GO" id="GO:0042060">
    <property type="term" value="P:wound healing"/>
    <property type="evidence" value="ECO:0000266"/>
    <property type="project" value="RGD"/>
</dbReference>
<dbReference type="CDD" id="cd23320">
    <property type="entry name" value="beta-trefoil_FGF10"/>
    <property type="match status" value="1"/>
</dbReference>
<dbReference type="FunFam" id="2.80.10.50:FF:000004">
    <property type="entry name" value="Fibroblast growth factor"/>
    <property type="match status" value="1"/>
</dbReference>
<dbReference type="Gene3D" id="2.80.10.50">
    <property type="match status" value="1"/>
</dbReference>
<dbReference type="InterPro" id="IPR002209">
    <property type="entry name" value="Fibroblast_GF_fam"/>
</dbReference>
<dbReference type="InterPro" id="IPR008996">
    <property type="entry name" value="IL1/FGF"/>
</dbReference>
<dbReference type="PANTHER" id="PTHR11486">
    <property type="entry name" value="FIBROBLAST GROWTH FACTOR"/>
    <property type="match status" value="1"/>
</dbReference>
<dbReference type="Pfam" id="PF00167">
    <property type="entry name" value="FGF"/>
    <property type="match status" value="1"/>
</dbReference>
<dbReference type="PRINTS" id="PR00263">
    <property type="entry name" value="HBGFFGF"/>
</dbReference>
<dbReference type="PRINTS" id="PR00262">
    <property type="entry name" value="IL1HBGF"/>
</dbReference>
<dbReference type="SMART" id="SM00442">
    <property type="entry name" value="FGF"/>
    <property type="match status" value="1"/>
</dbReference>
<dbReference type="SUPFAM" id="SSF50353">
    <property type="entry name" value="Cytokine"/>
    <property type="match status" value="1"/>
</dbReference>
<dbReference type="PROSITE" id="PS00247">
    <property type="entry name" value="HBGF_FGF"/>
    <property type="match status" value="1"/>
</dbReference>
<sequence>MWKWILTHCASAFPHLPGCCCCFLLLFLVSSVPVTCQALGQDMVSPEATNSSSSSSSSSSSSSFSSPSSAGRHVRSYNHLQGDVRWRKLFSFTKYFLKIEKNGKVSGTKKENCPYSILEITSVEIGVVAVKAINSNYYLAMNKKGKLYGSKEFNNDCKLKERIEENGYNTYASFNWQHNGRQMYVALNGKGAPRRGQKTRRKNTSAHFLPMVVHS</sequence>
<reference key="1">
    <citation type="journal article" date="1996" name="J. Biol. Chem.">
        <title>Structure and expression of the rat mRNA encoding a novel member of the fibroblast growth factor family.</title>
        <authorList>
            <person name="Yamasaki M."/>
            <person name="Miyake A."/>
            <person name="Tagashira S."/>
            <person name="Itoh N."/>
        </authorList>
    </citation>
    <scope>NUCLEOTIDE SEQUENCE [MRNA]</scope>
    <source>
        <strain>Wistar</strain>
    </source>
</reference>
<organism>
    <name type="scientific">Rattus norvegicus</name>
    <name type="common">Rat</name>
    <dbReference type="NCBI Taxonomy" id="10116"/>
    <lineage>
        <taxon>Eukaryota</taxon>
        <taxon>Metazoa</taxon>
        <taxon>Chordata</taxon>
        <taxon>Craniata</taxon>
        <taxon>Vertebrata</taxon>
        <taxon>Euteleostomi</taxon>
        <taxon>Mammalia</taxon>
        <taxon>Eutheria</taxon>
        <taxon>Euarchontoglires</taxon>
        <taxon>Glires</taxon>
        <taxon>Rodentia</taxon>
        <taxon>Myomorpha</taxon>
        <taxon>Muroidea</taxon>
        <taxon>Muridae</taxon>
        <taxon>Murinae</taxon>
        <taxon>Rattus</taxon>
    </lineage>
</organism>
<gene>
    <name type="primary">Fgf10</name>
</gene>
<name>FGF10_RAT</name>